<dbReference type="EMBL" id="CP001612">
    <property type="protein sequence ID" value="ACP53134.1"/>
    <property type="molecule type" value="Genomic_DNA"/>
</dbReference>
<dbReference type="RefSeq" id="WP_004996637.1">
    <property type="nucleotide sequence ID" value="NC_012633.1"/>
</dbReference>
<dbReference type="SMR" id="C3PMH4"/>
<dbReference type="GeneID" id="95361893"/>
<dbReference type="KEGG" id="raf:RAF_ORF0167"/>
<dbReference type="HOGENOM" id="CLU_062853_0_0_5"/>
<dbReference type="Proteomes" id="UP000002305">
    <property type="component" value="Chromosome"/>
</dbReference>
<dbReference type="GO" id="GO:0015934">
    <property type="term" value="C:large ribosomal subunit"/>
    <property type="evidence" value="ECO:0007669"/>
    <property type="project" value="InterPro"/>
</dbReference>
<dbReference type="GO" id="GO:0019843">
    <property type="term" value="F:rRNA binding"/>
    <property type="evidence" value="ECO:0007669"/>
    <property type="project" value="UniProtKB-UniRule"/>
</dbReference>
<dbReference type="GO" id="GO:0003735">
    <property type="term" value="F:structural constituent of ribosome"/>
    <property type="evidence" value="ECO:0007669"/>
    <property type="project" value="InterPro"/>
</dbReference>
<dbReference type="GO" id="GO:0000049">
    <property type="term" value="F:tRNA binding"/>
    <property type="evidence" value="ECO:0007669"/>
    <property type="project" value="UniProtKB-KW"/>
</dbReference>
<dbReference type="GO" id="GO:0006417">
    <property type="term" value="P:regulation of translation"/>
    <property type="evidence" value="ECO:0007669"/>
    <property type="project" value="UniProtKB-KW"/>
</dbReference>
<dbReference type="GO" id="GO:0006412">
    <property type="term" value="P:translation"/>
    <property type="evidence" value="ECO:0007669"/>
    <property type="project" value="UniProtKB-UniRule"/>
</dbReference>
<dbReference type="CDD" id="cd00403">
    <property type="entry name" value="Ribosomal_L1"/>
    <property type="match status" value="1"/>
</dbReference>
<dbReference type="FunFam" id="3.40.50.790:FF:000001">
    <property type="entry name" value="50S ribosomal protein L1"/>
    <property type="match status" value="1"/>
</dbReference>
<dbReference type="Gene3D" id="3.30.190.20">
    <property type="match status" value="1"/>
</dbReference>
<dbReference type="Gene3D" id="3.40.50.790">
    <property type="match status" value="1"/>
</dbReference>
<dbReference type="HAMAP" id="MF_01318_B">
    <property type="entry name" value="Ribosomal_uL1_B"/>
    <property type="match status" value="1"/>
</dbReference>
<dbReference type="InterPro" id="IPR005878">
    <property type="entry name" value="Ribosom_uL1_bac-type"/>
</dbReference>
<dbReference type="InterPro" id="IPR002143">
    <property type="entry name" value="Ribosomal_uL1"/>
</dbReference>
<dbReference type="InterPro" id="IPR023674">
    <property type="entry name" value="Ribosomal_uL1-like"/>
</dbReference>
<dbReference type="InterPro" id="IPR028364">
    <property type="entry name" value="Ribosomal_uL1/biogenesis"/>
</dbReference>
<dbReference type="InterPro" id="IPR016095">
    <property type="entry name" value="Ribosomal_uL1_3-a/b-sand"/>
</dbReference>
<dbReference type="InterPro" id="IPR023673">
    <property type="entry name" value="Ribosomal_uL1_CS"/>
</dbReference>
<dbReference type="NCBIfam" id="TIGR01169">
    <property type="entry name" value="rplA_bact"/>
    <property type="match status" value="1"/>
</dbReference>
<dbReference type="PANTHER" id="PTHR36427">
    <property type="entry name" value="54S RIBOSOMAL PROTEIN L1, MITOCHONDRIAL"/>
    <property type="match status" value="1"/>
</dbReference>
<dbReference type="PANTHER" id="PTHR36427:SF3">
    <property type="entry name" value="LARGE RIBOSOMAL SUBUNIT PROTEIN UL1M"/>
    <property type="match status" value="1"/>
</dbReference>
<dbReference type="Pfam" id="PF00687">
    <property type="entry name" value="Ribosomal_L1"/>
    <property type="match status" value="1"/>
</dbReference>
<dbReference type="PIRSF" id="PIRSF002155">
    <property type="entry name" value="Ribosomal_L1"/>
    <property type="match status" value="1"/>
</dbReference>
<dbReference type="SUPFAM" id="SSF56808">
    <property type="entry name" value="Ribosomal protein L1"/>
    <property type="match status" value="1"/>
</dbReference>
<dbReference type="PROSITE" id="PS01199">
    <property type="entry name" value="RIBOSOMAL_L1"/>
    <property type="match status" value="1"/>
</dbReference>
<sequence length="239" mass="25548">MSNKKDVAVKISGGKKIREAREKVKSDTLYNLTNAVERLKSASYVKFDPTLEIVMKLGIDSRHSDQMVRGVVNLPAGTGKTVRVAVICKEEREEEAKSAGADLVGSTNIIDEIKAGKINFDVCIATPDMMVAIGSVARILGPKGLMPNPKLGTVTLDIKNAIKNAKSGQVEYRAEKAGIIHAGLGKLSFSDQDLLKNLNAFIEAVIKAKPAGLKGSYLKAMYLSSTMGASVQIDLTSIA</sequence>
<gene>
    <name evidence="1" type="primary">rplA</name>
    <name type="ordered locus">RAF_ORF0167</name>
</gene>
<accession>C3PMH4</accession>
<proteinExistence type="inferred from homology"/>
<reference key="1">
    <citation type="journal article" date="2009" name="BMC Genomics">
        <title>Analysis of the Rickettsia africae genome reveals that virulence acquisition in Rickettsia species may be explained by genome reduction.</title>
        <authorList>
            <person name="Fournier P.-E."/>
            <person name="El Karkouri K."/>
            <person name="Leroy Q."/>
            <person name="Robert C."/>
            <person name="Giumelli B."/>
            <person name="Renesto P."/>
            <person name="Socolovschi C."/>
            <person name="Parola P."/>
            <person name="Audic S."/>
            <person name="Raoult D."/>
        </authorList>
    </citation>
    <scope>NUCLEOTIDE SEQUENCE [LARGE SCALE GENOMIC DNA]</scope>
    <source>
        <strain>ESF-5</strain>
    </source>
</reference>
<keyword id="KW-0678">Repressor</keyword>
<keyword id="KW-0687">Ribonucleoprotein</keyword>
<keyword id="KW-0689">Ribosomal protein</keyword>
<keyword id="KW-0694">RNA-binding</keyword>
<keyword id="KW-0699">rRNA-binding</keyword>
<keyword id="KW-0810">Translation regulation</keyword>
<keyword id="KW-0820">tRNA-binding</keyword>
<evidence type="ECO:0000255" key="1">
    <source>
        <dbReference type="HAMAP-Rule" id="MF_01318"/>
    </source>
</evidence>
<evidence type="ECO:0000305" key="2"/>
<protein>
    <recommendedName>
        <fullName evidence="1">Large ribosomal subunit protein uL1</fullName>
    </recommendedName>
    <alternativeName>
        <fullName evidence="2">50S ribosomal protein L1</fullName>
    </alternativeName>
</protein>
<organism>
    <name type="scientific">Rickettsia africae (strain ESF-5)</name>
    <dbReference type="NCBI Taxonomy" id="347255"/>
    <lineage>
        <taxon>Bacteria</taxon>
        <taxon>Pseudomonadati</taxon>
        <taxon>Pseudomonadota</taxon>
        <taxon>Alphaproteobacteria</taxon>
        <taxon>Rickettsiales</taxon>
        <taxon>Rickettsiaceae</taxon>
        <taxon>Rickettsieae</taxon>
        <taxon>Rickettsia</taxon>
        <taxon>spotted fever group</taxon>
    </lineage>
</organism>
<name>RL1_RICAE</name>
<feature type="chain" id="PRO_1000214431" description="Large ribosomal subunit protein uL1">
    <location>
        <begin position="1"/>
        <end position="239"/>
    </location>
</feature>
<comment type="function">
    <text evidence="1">Binds directly to 23S rRNA. The L1 stalk is quite mobile in the ribosome, and is involved in E site tRNA release.</text>
</comment>
<comment type="function">
    <text evidence="1">Protein L1 is also a translational repressor protein, it controls the translation of the L11 operon by binding to its mRNA.</text>
</comment>
<comment type="subunit">
    <text evidence="1">Part of the 50S ribosomal subunit.</text>
</comment>
<comment type="similarity">
    <text evidence="1">Belongs to the universal ribosomal protein uL1 family.</text>
</comment>